<comment type="function">
    <text evidence="1">Controls the transcription of genes involved in arginine and lysine metabolism.</text>
</comment>
<comment type="subunit">
    <text evidence="1">Homodimer.</text>
</comment>
<comment type="similarity">
    <text evidence="2">Belongs to the LysR transcriptional regulatory family.</text>
</comment>
<name>ARGP_SHIF8</name>
<reference key="1">
    <citation type="journal article" date="2006" name="BMC Genomics">
        <title>Complete genome sequence of Shigella flexneri 5b and comparison with Shigella flexneri 2a.</title>
        <authorList>
            <person name="Nie H."/>
            <person name="Yang F."/>
            <person name="Zhang X."/>
            <person name="Yang J."/>
            <person name="Chen L."/>
            <person name="Wang J."/>
            <person name="Xiong Z."/>
            <person name="Peng J."/>
            <person name="Sun L."/>
            <person name="Dong J."/>
            <person name="Xue Y."/>
            <person name="Xu X."/>
            <person name="Chen S."/>
            <person name="Yao Z."/>
            <person name="Shen Y."/>
            <person name="Jin Q."/>
        </authorList>
    </citation>
    <scope>NUCLEOTIDE SEQUENCE [LARGE SCALE GENOMIC DNA]</scope>
    <source>
        <strain>8401</strain>
    </source>
</reference>
<sequence>MKRPDYRTLQALDAVIRERGFERAAQKLCITQSAVSQRIKQLENMFGQPLLVRTVPPRPTEQGQKLLALLRQVELLEEEWLGDEQTGSTPLLLSLAVNADSLATWLLPALAPVLADSPIRLNLQVEDETRTQERLRRGEVVGAVSIQHQALPSCLVDKLGALDYLFVSSKPFAEKYFPNGVTRSALLKAPVVAFDHLDDMHQAFLQQNFDLPPGSVPCHIVNSSEAFVQLARQGTTCCMIPHLQIEKELASGELIDLTPGLFQRRMLYWHRFAPESRMMRKVTDALLDYGHKVLRQD</sequence>
<dbReference type="EMBL" id="CP000266">
    <property type="protein sequence ID" value="ABF05031.1"/>
    <property type="molecule type" value="Genomic_DNA"/>
</dbReference>
<dbReference type="RefSeq" id="WP_000828351.1">
    <property type="nucleotide sequence ID" value="NC_008258.1"/>
</dbReference>
<dbReference type="SMR" id="Q0T0Y4"/>
<dbReference type="GeneID" id="93779084"/>
<dbReference type="KEGG" id="sfv:SFV_2962"/>
<dbReference type="HOGENOM" id="CLU_063829_0_0_6"/>
<dbReference type="Proteomes" id="UP000000659">
    <property type="component" value="Chromosome"/>
</dbReference>
<dbReference type="GO" id="GO:0003677">
    <property type="term" value="F:DNA binding"/>
    <property type="evidence" value="ECO:0007669"/>
    <property type="project" value="UniProtKB-UniRule"/>
</dbReference>
<dbReference type="GO" id="GO:0003700">
    <property type="term" value="F:DNA-binding transcription factor activity"/>
    <property type="evidence" value="ECO:0007669"/>
    <property type="project" value="UniProtKB-UniRule"/>
</dbReference>
<dbReference type="CDD" id="cd08428">
    <property type="entry name" value="PBP2_IciA_ArgP"/>
    <property type="match status" value="1"/>
</dbReference>
<dbReference type="FunFam" id="1.10.10.10:FF:000061">
    <property type="entry name" value="HTH-type transcriptional regulator ArgP"/>
    <property type="match status" value="1"/>
</dbReference>
<dbReference type="FunFam" id="3.40.190.290:FF:000002">
    <property type="entry name" value="HTH-type transcriptional regulator ArgP"/>
    <property type="match status" value="1"/>
</dbReference>
<dbReference type="Gene3D" id="3.40.190.290">
    <property type="match status" value="1"/>
</dbReference>
<dbReference type="Gene3D" id="1.10.10.10">
    <property type="entry name" value="Winged helix-like DNA-binding domain superfamily/Winged helix DNA-binding domain"/>
    <property type="match status" value="1"/>
</dbReference>
<dbReference type="HAMAP" id="MF_00513">
    <property type="entry name" value="HTH_type_ArgP"/>
    <property type="match status" value="1"/>
</dbReference>
<dbReference type="InterPro" id="IPR017685">
    <property type="entry name" value="ArgP"/>
</dbReference>
<dbReference type="InterPro" id="IPR023490">
    <property type="entry name" value="ArgP_gammaproteobact"/>
</dbReference>
<dbReference type="InterPro" id="IPR050176">
    <property type="entry name" value="LTTR"/>
</dbReference>
<dbReference type="InterPro" id="IPR005119">
    <property type="entry name" value="LysR_subst-bd"/>
</dbReference>
<dbReference type="InterPro" id="IPR000847">
    <property type="entry name" value="Tscrpt_reg_HTH_LysR"/>
</dbReference>
<dbReference type="InterPro" id="IPR036388">
    <property type="entry name" value="WH-like_DNA-bd_sf"/>
</dbReference>
<dbReference type="InterPro" id="IPR036390">
    <property type="entry name" value="WH_DNA-bd_sf"/>
</dbReference>
<dbReference type="NCBIfam" id="TIGR03298">
    <property type="entry name" value="argP"/>
    <property type="match status" value="1"/>
</dbReference>
<dbReference type="NCBIfam" id="NF002964">
    <property type="entry name" value="PRK03635.1"/>
    <property type="match status" value="1"/>
</dbReference>
<dbReference type="NCBIfam" id="NF009888">
    <property type="entry name" value="PRK13348.1"/>
    <property type="match status" value="1"/>
</dbReference>
<dbReference type="PANTHER" id="PTHR30579:SF2">
    <property type="entry name" value="HTH-TYPE TRANSCRIPTIONAL REGULATOR ARGP"/>
    <property type="match status" value="1"/>
</dbReference>
<dbReference type="PANTHER" id="PTHR30579">
    <property type="entry name" value="TRANSCRIPTIONAL REGULATOR"/>
    <property type="match status" value="1"/>
</dbReference>
<dbReference type="Pfam" id="PF00126">
    <property type="entry name" value="HTH_1"/>
    <property type="match status" value="1"/>
</dbReference>
<dbReference type="Pfam" id="PF03466">
    <property type="entry name" value="LysR_substrate"/>
    <property type="match status" value="1"/>
</dbReference>
<dbReference type="PRINTS" id="PR00039">
    <property type="entry name" value="HTHLYSR"/>
</dbReference>
<dbReference type="SUPFAM" id="SSF53850">
    <property type="entry name" value="Periplasmic binding protein-like II"/>
    <property type="match status" value="1"/>
</dbReference>
<dbReference type="SUPFAM" id="SSF46785">
    <property type="entry name" value="Winged helix' DNA-binding domain"/>
    <property type="match status" value="1"/>
</dbReference>
<dbReference type="PROSITE" id="PS50931">
    <property type="entry name" value="HTH_LYSR"/>
    <property type="match status" value="1"/>
</dbReference>
<proteinExistence type="inferred from homology"/>
<feature type="chain" id="PRO_1000060882" description="HTH-type transcriptional regulator ArgP">
    <location>
        <begin position="1"/>
        <end position="297"/>
    </location>
</feature>
<feature type="domain" description="HTH lysR-type" evidence="1">
    <location>
        <begin position="4"/>
        <end position="60"/>
    </location>
</feature>
<feature type="DNA-binding region" description="H-T-H motif" evidence="1">
    <location>
        <begin position="21"/>
        <end position="40"/>
    </location>
</feature>
<gene>
    <name evidence="1" type="primary">argP</name>
    <name type="synonym">iciA</name>
    <name type="ordered locus">SFV_2962</name>
</gene>
<protein>
    <recommendedName>
        <fullName evidence="1">HTH-type transcriptional regulator ArgP</fullName>
    </recommendedName>
</protein>
<accession>Q0T0Y4</accession>
<organism>
    <name type="scientific">Shigella flexneri serotype 5b (strain 8401)</name>
    <dbReference type="NCBI Taxonomy" id="373384"/>
    <lineage>
        <taxon>Bacteria</taxon>
        <taxon>Pseudomonadati</taxon>
        <taxon>Pseudomonadota</taxon>
        <taxon>Gammaproteobacteria</taxon>
        <taxon>Enterobacterales</taxon>
        <taxon>Enterobacteriaceae</taxon>
        <taxon>Shigella</taxon>
    </lineage>
</organism>
<evidence type="ECO:0000255" key="1">
    <source>
        <dbReference type="HAMAP-Rule" id="MF_00513"/>
    </source>
</evidence>
<evidence type="ECO:0000305" key="2"/>
<keyword id="KW-0238">DNA-binding</keyword>
<keyword id="KW-0804">Transcription</keyword>
<keyword id="KW-0805">Transcription regulation</keyword>